<protein>
    <recommendedName>
        <fullName evidence="1">UPF0310 protein SGO_1818</fullName>
    </recommendedName>
</protein>
<name>Y1818_STRGC</name>
<keyword id="KW-1185">Reference proteome</keyword>
<accession>A8AZ77</accession>
<feature type="chain" id="PRO_1000083578" description="UPF0310 protein SGO_1818">
    <location>
        <begin position="1"/>
        <end position="141"/>
    </location>
</feature>
<dbReference type="EMBL" id="CP000725">
    <property type="protein sequence ID" value="ABV09910.1"/>
    <property type="molecule type" value="Genomic_DNA"/>
</dbReference>
<dbReference type="RefSeq" id="WP_012130852.1">
    <property type="nucleotide sequence ID" value="NC_009785.1"/>
</dbReference>
<dbReference type="SMR" id="A8AZ77"/>
<dbReference type="STRING" id="467705.SGO_1818"/>
<dbReference type="KEGG" id="sgo:SGO_1818"/>
<dbReference type="eggNOG" id="COG1673">
    <property type="taxonomic scope" value="Bacteria"/>
</dbReference>
<dbReference type="HOGENOM" id="CLU_117727_0_0_9"/>
<dbReference type="Proteomes" id="UP000001131">
    <property type="component" value="Chromosome"/>
</dbReference>
<dbReference type="CDD" id="cd21132">
    <property type="entry name" value="EVE-like"/>
    <property type="match status" value="1"/>
</dbReference>
<dbReference type="Gene3D" id="3.10.590.10">
    <property type="entry name" value="ph1033 like domains"/>
    <property type="match status" value="1"/>
</dbReference>
<dbReference type="HAMAP" id="MF_00771">
    <property type="entry name" value="UPF0310"/>
    <property type="match status" value="1"/>
</dbReference>
<dbReference type="InterPro" id="IPR002740">
    <property type="entry name" value="EVE_domain"/>
</dbReference>
<dbReference type="InterPro" id="IPR015947">
    <property type="entry name" value="PUA-like_sf"/>
</dbReference>
<dbReference type="InterPro" id="IPR022996">
    <property type="entry name" value="UPF0310"/>
</dbReference>
<dbReference type="NCBIfam" id="NF002616">
    <property type="entry name" value="PRK02268.1-2"/>
    <property type="match status" value="1"/>
</dbReference>
<dbReference type="NCBIfam" id="NF002617">
    <property type="entry name" value="PRK02268.1-3"/>
    <property type="match status" value="1"/>
</dbReference>
<dbReference type="Pfam" id="PF01878">
    <property type="entry name" value="EVE"/>
    <property type="match status" value="1"/>
</dbReference>
<dbReference type="SUPFAM" id="SSF88697">
    <property type="entry name" value="PUA domain-like"/>
    <property type="match status" value="1"/>
</dbReference>
<sequence length="141" mass="16943">MTRFWIGVVSKEHVLRGVEGGFCQVCHGKKAPLNRMKKGDYLLYYSPKYQMNDQEKLQAFTAVGKILDDTAYQVEMFEDFFPFRRDVSYYQPVKDCPIEQIRQHPQWRQYASQLRYGHFEVSKDFFLYVFDQMKVDRSRNN</sequence>
<proteinExistence type="inferred from homology"/>
<comment type="similarity">
    <text evidence="1">Belongs to the UPF0310 family.</text>
</comment>
<organism>
    <name type="scientific">Streptococcus gordonii (strain Challis / ATCC 35105 / BCRC 15272 / CH1 / DL1 / V288)</name>
    <dbReference type="NCBI Taxonomy" id="467705"/>
    <lineage>
        <taxon>Bacteria</taxon>
        <taxon>Bacillati</taxon>
        <taxon>Bacillota</taxon>
        <taxon>Bacilli</taxon>
        <taxon>Lactobacillales</taxon>
        <taxon>Streptococcaceae</taxon>
        <taxon>Streptococcus</taxon>
    </lineage>
</organism>
<evidence type="ECO:0000255" key="1">
    <source>
        <dbReference type="HAMAP-Rule" id="MF_00771"/>
    </source>
</evidence>
<gene>
    <name type="ordered locus">SGO_1818</name>
</gene>
<reference key="1">
    <citation type="journal article" date="2007" name="J. Bacteriol.">
        <title>Genome-wide transcriptional changes in Streptococcus gordonii in response to competence signaling peptide.</title>
        <authorList>
            <person name="Vickerman M.M."/>
            <person name="Iobst S."/>
            <person name="Jesionowski A.M."/>
            <person name="Gill S.R."/>
        </authorList>
    </citation>
    <scope>NUCLEOTIDE SEQUENCE [LARGE SCALE GENOMIC DNA]</scope>
    <source>
        <strain>Challis / ATCC 35105 / BCRC 15272 / CH1 / DL1 / V288</strain>
    </source>
</reference>